<feature type="chain" id="PRO_0000261989" description="Nucleotide-binding protein XCV3791">
    <location>
        <begin position="1"/>
        <end position="161"/>
    </location>
</feature>
<evidence type="ECO:0000255" key="1">
    <source>
        <dbReference type="HAMAP-Rule" id="MF_00632"/>
    </source>
</evidence>
<dbReference type="EMBL" id="AM039952">
    <property type="protein sequence ID" value="CAJ25522.1"/>
    <property type="molecule type" value="Genomic_DNA"/>
</dbReference>
<dbReference type="RefSeq" id="WP_008578012.1">
    <property type="nucleotide sequence ID" value="NZ_CP017190.1"/>
</dbReference>
<dbReference type="SMR" id="Q3BNZ1"/>
<dbReference type="STRING" id="456327.BJD11_03690"/>
<dbReference type="KEGG" id="xcv:XCV3791"/>
<dbReference type="eggNOG" id="COG1666">
    <property type="taxonomic scope" value="Bacteria"/>
</dbReference>
<dbReference type="HOGENOM" id="CLU_099839_1_0_6"/>
<dbReference type="Proteomes" id="UP000007069">
    <property type="component" value="Chromosome"/>
</dbReference>
<dbReference type="GO" id="GO:0005829">
    <property type="term" value="C:cytosol"/>
    <property type="evidence" value="ECO:0007669"/>
    <property type="project" value="TreeGrafter"/>
</dbReference>
<dbReference type="GO" id="GO:0000166">
    <property type="term" value="F:nucleotide binding"/>
    <property type="evidence" value="ECO:0007669"/>
    <property type="project" value="TreeGrafter"/>
</dbReference>
<dbReference type="CDD" id="cd11740">
    <property type="entry name" value="YajQ_like"/>
    <property type="match status" value="1"/>
</dbReference>
<dbReference type="FunFam" id="3.30.70.990:FF:000001">
    <property type="entry name" value="UPF0234 protein YajQ"/>
    <property type="match status" value="1"/>
</dbReference>
<dbReference type="Gene3D" id="3.30.70.860">
    <property type="match status" value="1"/>
</dbReference>
<dbReference type="Gene3D" id="3.30.70.990">
    <property type="entry name" value="YajQ-like, domain 2"/>
    <property type="match status" value="1"/>
</dbReference>
<dbReference type="HAMAP" id="MF_00632">
    <property type="entry name" value="YajQ"/>
    <property type="match status" value="1"/>
</dbReference>
<dbReference type="InterPro" id="IPR007551">
    <property type="entry name" value="DUF520"/>
</dbReference>
<dbReference type="InterPro" id="IPR035571">
    <property type="entry name" value="UPF0234-like_C"/>
</dbReference>
<dbReference type="InterPro" id="IPR035570">
    <property type="entry name" value="UPF0234_N"/>
</dbReference>
<dbReference type="InterPro" id="IPR036183">
    <property type="entry name" value="YajQ-like_sf"/>
</dbReference>
<dbReference type="NCBIfam" id="NF003819">
    <property type="entry name" value="PRK05412.1"/>
    <property type="match status" value="1"/>
</dbReference>
<dbReference type="PANTHER" id="PTHR30476">
    <property type="entry name" value="UPF0234 PROTEIN YAJQ"/>
    <property type="match status" value="1"/>
</dbReference>
<dbReference type="PANTHER" id="PTHR30476:SF0">
    <property type="entry name" value="UPF0234 PROTEIN YAJQ"/>
    <property type="match status" value="1"/>
</dbReference>
<dbReference type="Pfam" id="PF04461">
    <property type="entry name" value="DUF520"/>
    <property type="match status" value="1"/>
</dbReference>
<dbReference type="SUPFAM" id="SSF89963">
    <property type="entry name" value="YajQ-like"/>
    <property type="match status" value="2"/>
</dbReference>
<reference key="1">
    <citation type="journal article" date="2005" name="J. Bacteriol.">
        <title>Insights into genome plasticity and pathogenicity of the plant pathogenic Bacterium Xanthomonas campestris pv. vesicatoria revealed by the complete genome sequence.</title>
        <authorList>
            <person name="Thieme F."/>
            <person name="Koebnik R."/>
            <person name="Bekel T."/>
            <person name="Berger C."/>
            <person name="Boch J."/>
            <person name="Buettner D."/>
            <person name="Caldana C."/>
            <person name="Gaigalat L."/>
            <person name="Goesmann A."/>
            <person name="Kay S."/>
            <person name="Kirchner O."/>
            <person name="Lanz C."/>
            <person name="Linke B."/>
            <person name="McHardy A.C."/>
            <person name="Meyer F."/>
            <person name="Mittenhuber G."/>
            <person name="Nies D.H."/>
            <person name="Niesbach-Kloesgen U."/>
            <person name="Patschkowski T."/>
            <person name="Rueckert C."/>
            <person name="Rupp O."/>
            <person name="Schneiker S."/>
            <person name="Schuster S.C."/>
            <person name="Vorhoelter F.J."/>
            <person name="Weber E."/>
            <person name="Puehler A."/>
            <person name="Bonas U."/>
            <person name="Bartels D."/>
            <person name="Kaiser O."/>
        </authorList>
    </citation>
    <scope>NUCLEOTIDE SEQUENCE [LARGE SCALE GENOMIC DNA]</scope>
    <source>
        <strain>85-10</strain>
    </source>
</reference>
<comment type="function">
    <text evidence="1">Nucleotide-binding protein.</text>
</comment>
<comment type="similarity">
    <text evidence="1">Belongs to the YajQ family.</text>
</comment>
<organism>
    <name type="scientific">Xanthomonas euvesicatoria pv. vesicatoria (strain 85-10)</name>
    <name type="common">Xanthomonas campestris pv. vesicatoria</name>
    <dbReference type="NCBI Taxonomy" id="316273"/>
    <lineage>
        <taxon>Bacteria</taxon>
        <taxon>Pseudomonadati</taxon>
        <taxon>Pseudomonadota</taxon>
        <taxon>Gammaproteobacteria</taxon>
        <taxon>Lysobacterales</taxon>
        <taxon>Lysobacteraceae</taxon>
        <taxon>Xanthomonas</taxon>
    </lineage>
</organism>
<sequence>MPSFDVVSEVDKHELTNAVDQANRELDTRFDFKGVQAKFELEDGKVINQSAPSDFQIKQMTDILRARLLARGIDIRCLEFGEVETNLAGARQKVTVKQGIEQKQAKQLVAKLKEAKLKVEAQINGDKLRVTGKKRDDLQDAIALLKKADFELPLQFDNFRD</sequence>
<protein>
    <recommendedName>
        <fullName evidence="1">Nucleotide-binding protein XCV3791</fullName>
    </recommendedName>
</protein>
<name>Y3791_XANE5</name>
<accession>Q3BNZ1</accession>
<proteinExistence type="inferred from homology"/>
<gene>
    <name type="ordered locus">XCV3791</name>
</gene>
<keyword id="KW-0547">Nucleotide-binding</keyword>